<dbReference type="EC" id="3.4.-.-" evidence="2"/>
<dbReference type="EMBL" id="J02482">
    <property type="protein sequence ID" value="AAA32572.1"/>
    <property type="molecule type" value="Genomic_DNA"/>
</dbReference>
<dbReference type="PIR" id="A04241">
    <property type="entry name" value="ZBBPF4"/>
</dbReference>
<dbReference type="PDB" id="1AL0">
    <property type="method" value="X-ray"/>
    <property type="resolution" value="3.50 A"/>
    <property type="chains" value="B=1-120"/>
</dbReference>
<dbReference type="PDB" id="1CD3">
    <property type="method" value="X-ray"/>
    <property type="resolution" value="3.50 A"/>
    <property type="chains" value="B=1-120"/>
</dbReference>
<dbReference type="PDBsum" id="1AL0"/>
<dbReference type="PDBsum" id="1CD3"/>
<dbReference type="SMR" id="P03633"/>
<dbReference type="KEGG" id="vg:2546405"/>
<dbReference type="EvolutionaryTrace" id="P03633"/>
<dbReference type="Proteomes" id="UP000005893">
    <property type="component" value="Segment"/>
</dbReference>
<dbReference type="GO" id="GO:0030430">
    <property type="term" value="C:host cell cytoplasm"/>
    <property type="evidence" value="ECO:0007669"/>
    <property type="project" value="UniProtKB-SubCell"/>
</dbReference>
<dbReference type="GO" id="GO:0046806">
    <property type="term" value="C:viral scaffold"/>
    <property type="evidence" value="ECO:0000314"/>
    <property type="project" value="UniProtKB"/>
</dbReference>
<dbReference type="GO" id="GO:0008233">
    <property type="term" value="F:peptidase activity"/>
    <property type="evidence" value="ECO:0007669"/>
    <property type="project" value="UniProtKB-KW"/>
</dbReference>
<dbReference type="GO" id="GO:0006508">
    <property type="term" value="P:proteolysis"/>
    <property type="evidence" value="ECO:0007669"/>
    <property type="project" value="UniProtKB-KW"/>
</dbReference>
<dbReference type="GO" id="GO:0046807">
    <property type="term" value="P:viral scaffold assembly and maintenance"/>
    <property type="evidence" value="ECO:0000314"/>
    <property type="project" value="UniProtKB"/>
</dbReference>
<dbReference type="Gene3D" id="4.10.1260.10">
    <property type="entry name" value="Scaffolding protein gpD of bacteriophage procapsid"/>
    <property type="match status" value="1"/>
</dbReference>
<dbReference type="InterPro" id="IPR003513">
    <property type="entry name" value="Phage_B"/>
</dbReference>
<dbReference type="InterPro" id="IPR038149">
    <property type="entry name" value="Phage_B_sf"/>
</dbReference>
<dbReference type="Pfam" id="PF02304">
    <property type="entry name" value="Phage_B"/>
    <property type="match status" value="1"/>
</dbReference>
<accession>P03633</accession>
<proteinExistence type="evidence at protein level"/>
<gene>
    <name type="primary">B</name>
</gene>
<feature type="chain" id="PRO_0000164870" description="Internal scaffolding protein B">
    <location>
        <begin position="1"/>
        <end position="120"/>
    </location>
</feature>
<feature type="region of interest" description="Disordered" evidence="1">
    <location>
        <begin position="1"/>
        <end position="64"/>
    </location>
</feature>
<feature type="compositionally biased region" description="Polar residues" evidence="1">
    <location>
        <begin position="1"/>
        <end position="23"/>
    </location>
</feature>
<feature type="compositionally biased region" description="Basic and acidic residues" evidence="1">
    <location>
        <begin position="24"/>
        <end position="36"/>
    </location>
</feature>
<feature type="compositionally biased region" description="Basic and acidic residues" evidence="1">
    <location>
        <begin position="48"/>
        <end position="64"/>
    </location>
</feature>
<feature type="site" description="Cleavage; by autolysis" evidence="2">
    <location>
        <begin position="77"/>
        <end position="78"/>
    </location>
</feature>
<feature type="site" description="Cleavage; by autolysis" evidence="2">
    <location>
        <begin position="93"/>
        <end position="94"/>
    </location>
</feature>
<feature type="site" description="Cleavage; by autolysis" evidence="2">
    <location>
        <begin position="108"/>
        <end position="109"/>
    </location>
</feature>
<feature type="helix" evidence="7">
    <location>
        <begin position="62"/>
        <end position="79"/>
    </location>
</feature>
<feature type="helix" evidence="6">
    <location>
        <begin position="87"/>
        <end position="90"/>
    </location>
</feature>
<feature type="helix" evidence="6">
    <location>
        <begin position="112"/>
        <end position="115"/>
    </location>
</feature>
<protein>
    <recommendedName>
        <fullName>Internal scaffolding protein B</fullName>
        <ecNumber evidence="2">3.4.-.-</ecNumber>
    </recommendedName>
    <alternativeName>
        <fullName>Scaffolding protein B</fullName>
        <shortName>GPB</shortName>
    </alternativeName>
</protein>
<comment type="function">
    <text evidence="2 3">Participates in the assembly of the viral procapsid in the cytoplasm. Forms first a 12S pre-assembly complex with protein H, and F and G pentamers, then twelve 12S complexes are joined by the D protein to form the procapsid. Internal scaffold protein B is released from the procapsid upon genome packaging (PubMed:159449). Autoproteolytic activity cleaves protein B and probably facilitates its removal through the pores of the procapsid (PubMed:12473449).</text>
</comment>
<comment type="subunit">
    <text evidence="4">Component of the procapsid complex composed of 60 copies of the internally located B, 240 copies of the external scaffolding protein D, 60 copies of each of the viral structural proteins F and G proteins, and 12 copies of H.</text>
</comment>
<comment type="subcellular location">
    <subcellularLocation>
        <location>Host cytoplasm</location>
    </subcellularLocation>
</comment>
<comment type="PTM">
    <text evidence="2">The proteolytic cleavage of the internal scaffolding protein B releases the scaffold protein in order to continue virion assembly.</text>
</comment>
<comment type="similarity">
    <text evidence="5">Belongs to the microviridae B protein family.</text>
</comment>
<organism>
    <name type="scientific">Enterobacteria phage phiX174</name>
    <name type="common">Isolate Sanger</name>
    <name type="synonym">Bacteriophage phi-X174</name>
    <dbReference type="NCBI Taxonomy" id="1217068"/>
    <lineage>
        <taxon>Viruses</taxon>
        <taxon>Monodnaviria</taxon>
        <taxon>Sangervirae</taxon>
        <taxon>Phixviricota</taxon>
        <taxon>Malgrandaviricetes</taxon>
        <taxon>Petitvirales</taxon>
        <taxon>Microviridae</taxon>
        <taxon>Bullavirinae</taxon>
        <taxon>Sinsheimervirus</taxon>
        <taxon>Escherichia phage phiX174</taxon>
    </lineage>
</organism>
<sequence length="120" mass="13843">MEQLTKNQAVATSQEAVQNQNEPQLRDENAHNDKSVHGVLNPTYQAGLRRDAVQPDIEAERKKRDEIEAGKSYCSRRFGGATCDDKSAQIYARFDKNDWRIQPAEFYRFHDAEVNTFGYF</sequence>
<reference key="1">
    <citation type="journal article" date="1977" name="Nature">
        <title>Nucleotide sequence of bacteriophage phi X174 DNA.</title>
        <authorList>
            <person name="Sanger F."/>
            <person name="Air G.M."/>
            <person name="Barrell B.G."/>
            <person name="Brown N.L."/>
            <person name="Coulson A.R."/>
            <person name="Fiddes J.C."/>
            <person name="Hutchison C.A. III"/>
            <person name="Slocombe P.M."/>
            <person name="Smith M."/>
        </authorList>
    </citation>
    <scope>NUCLEOTIDE SEQUENCE [GENOMIC DNA]</scope>
</reference>
<reference key="2">
    <citation type="journal article" date="1979" name="Proc. Natl. Acad. Sci. U.S.A.">
        <title>Isolation and identification of bacteriophage phi X174 prohead.</title>
        <authorList>
            <person name="Mukai R."/>
            <person name="Hamatake R.K."/>
            <person name="Hayashi M."/>
        </authorList>
    </citation>
    <scope>FUNCTION</scope>
    <scope>PROCAPSID STRUCTURE</scope>
</reference>
<reference key="3">
    <citation type="journal article" date="1988" name="J. Bacteriol.">
        <title>Proteolysis of bacteriophage phi X174 prohead protein gpB by a protease located in the Escherichia coli outer membrane.</title>
        <authorList>
            <person name="Richardson D.L. Jr."/>
            <person name="Aoyama A."/>
            <person name="Hayashi M."/>
        </authorList>
    </citation>
    <scope>CLEAVAGE SITE</scope>
    <scope>PROTEIN SEQUENCE OF 1-5</scope>
</reference>
<reference key="4">
    <citation type="journal article" date="2003" name="J. Mol. Biol.">
        <title>Structural studies of bacteriophage alpha3 assembly.</title>
        <authorList>
            <person name="Bernal R.A."/>
            <person name="Hafenstein S."/>
            <person name="Olson N.H."/>
            <person name="Bowman V.D."/>
            <person name="Chipman P.R."/>
            <person name="Baker T.S."/>
            <person name="Fane B.A."/>
            <person name="Rossmann M.G."/>
        </authorList>
    </citation>
    <scope>CATALYTIC ACTIVITY</scope>
    <scope>FUNCTION</scope>
    <scope>PROTEOLYTIC CLEAVAGE</scope>
</reference>
<reference key="5">
    <citation type="journal article" date="1997" name="Nature">
        <title>Structure of a viral procapsid with molecular scaffolding.</title>
        <authorList>
            <person name="Dokland T."/>
            <person name="McKenna R."/>
            <person name="Ilag L.L."/>
            <person name="Bowman B.R."/>
            <person name="Incardona N.L."/>
            <person name="Fane B.A."/>
            <person name="Rossmann M.G."/>
        </authorList>
    </citation>
    <scope>X-RAY CRYSTALLOGRAPHY (3.5 ANGSTROMS)</scope>
    <scope>SUBUNIT</scope>
</reference>
<organismHost>
    <name type="scientific">Escherichia coli C</name>
    <dbReference type="NCBI Taxonomy" id="498388"/>
</organismHost>
<keyword id="KW-0002">3D-structure</keyword>
<keyword id="KW-0068">Autocatalytic cleavage</keyword>
<keyword id="KW-0903">Direct protein sequencing</keyword>
<keyword id="KW-1035">Host cytoplasm</keyword>
<keyword id="KW-0378">Hydrolase</keyword>
<keyword id="KW-0645">Protease</keyword>
<keyword id="KW-1185">Reference proteome</keyword>
<keyword id="KW-0118">Viral capsid assembly</keyword>
<keyword id="KW-1188">Viral release from host cell</keyword>
<evidence type="ECO:0000256" key="1">
    <source>
        <dbReference type="SAM" id="MobiDB-lite"/>
    </source>
</evidence>
<evidence type="ECO:0000269" key="2">
    <source>
    </source>
</evidence>
<evidence type="ECO:0000269" key="3">
    <source>
    </source>
</evidence>
<evidence type="ECO:0000269" key="4">
    <source>
    </source>
</evidence>
<evidence type="ECO:0000305" key="5"/>
<evidence type="ECO:0007829" key="6">
    <source>
        <dbReference type="PDB" id="1AL0"/>
    </source>
</evidence>
<evidence type="ECO:0007829" key="7">
    <source>
        <dbReference type="PDB" id="1CD3"/>
    </source>
</evidence>
<name>SCAFB_BPPHS</name>